<feature type="chain" id="PRO_0000137195" description="Translation initiation factor IF-2">
    <location>
        <begin position="1"/>
        <end position="685"/>
    </location>
</feature>
<feature type="domain" description="tr-type G">
    <location>
        <begin position="185"/>
        <end position="354"/>
    </location>
</feature>
<feature type="region of interest" description="G1" evidence="1">
    <location>
        <begin position="194"/>
        <end position="201"/>
    </location>
</feature>
<feature type="region of interest" description="G2" evidence="1">
    <location>
        <begin position="219"/>
        <end position="223"/>
    </location>
</feature>
<feature type="region of interest" description="G3" evidence="1">
    <location>
        <begin position="240"/>
        <end position="243"/>
    </location>
</feature>
<feature type="region of interest" description="G4" evidence="1">
    <location>
        <begin position="294"/>
        <end position="297"/>
    </location>
</feature>
<feature type="region of interest" description="G5" evidence="1">
    <location>
        <begin position="330"/>
        <end position="332"/>
    </location>
</feature>
<feature type="binding site" evidence="2">
    <location>
        <begin position="194"/>
        <end position="201"/>
    </location>
    <ligand>
        <name>GTP</name>
        <dbReference type="ChEBI" id="CHEBI:37565"/>
    </ligand>
</feature>
<feature type="binding site" evidence="2">
    <location>
        <begin position="240"/>
        <end position="244"/>
    </location>
    <ligand>
        <name>GTP</name>
        <dbReference type="ChEBI" id="CHEBI:37565"/>
    </ligand>
</feature>
<feature type="binding site" evidence="2">
    <location>
        <begin position="294"/>
        <end position="297"/>
    </location>
    <ligand>
        <name>GTP</name>
        <dbReference type="ChEBI" id="CHEBI:37565"/>
    </ligand>
</feature>
<sequence length="685" mass="75657">MNALSKVRVYELSKELGISSKDLISLLKDEFSIEVKNHMSVVEEEDALLIKEFYGESKEENTEENIEEKYGDLQEAQIKVVKKNRKNKVKKNDDENDAQEEIVIEMEDTITVKELSDRLKKTYAEVIKELMMMGVMAAVNQEIDFEAAEKLGEKFEAIVVQREVDVLEESVEQYIEEEEEEGTVKRPPVVTVMGHVDHGKTSLLDAIRKEEVAASEAGGITQHIGAYTITINGEKITFLDTPGHEAFTSMRARGAQITDIVILVVAADDGIMPQTEEAINHCKAANVPMVVAINKMDRAGANPDKVKQQLAEKGLVAEDWGGDTITVPVSAHTKEGIDTLLEMVLLTAEMQELKSNPNRKAKGTVVDAKLDKGRGPVASLIVQNGTLNSGDSIIVGTTYGRIRAMFDDKGRKINSAGPSIPAEILGLSEVPSAGDRFYVVKDEKTAREMAEKRKEKTRSEYLATSKVSLEDLYSQIKEGKIKELNIIVKADVQGTIEAIRQSLEKLSTDEVKVRVIHGGVGAITETDVILANASSAVIIGFNVRPDSNAIVSAEKENVEIKTYRVIYSAIEDIKKAMIGMLEPEYKEVIQGRAEVRMTYKISNVGTVAGCYVQSGKITRNSGVRIIRDGIVIFESELSSLKRFKDDAKEVAAGYECGIMVEKFNDIKEGDTIEAYTMETIKKHTL</sequence>
<reference key="1">
    <citation type="journal article" date="2003" name="Proc. Natl. Acad. Sci. U.S.A.">
        <title>The genome sequence of Clostridium tetani, the causative agent of tetanus disease.</title>
        <authorList>
            <person name="Brueggemann H."/>
            <person name="Baeumer S."/>
            <person name="Fricke W.F."/>
            <person name="Wiezer A."/>
            <person name="Liesegang H."/>
            <person name="Decker I."/>
            <person name="Herzberg C."/>
            <person name="Martinez-Arias R."/>
            <person name="Merkl R."/>
            <person name="Henne A."/>
            <person name="Gottschalk G."/>
        </authorList>
    </citation>
    <scope>NUCLEOTIDE SEQUENCE [LARGE SCALE GENOMIC DNA]</scope>
    <source>
        <strain>Massachusetts / E88</strain>
    </source>
</reference>
<keyword id="KW-0963">Cytoplasm</keyword>
<keyword id="KW-0342">GTP-binding</keyword>
<keyword id="KW-0396">Initiation factor</keyword>
<keyword id="KW-0547">Nucleotide-binding</keyword>
<keyword id="KW-0648">Protein biosynthesis</keyword>
<keyword id="KW-1185">Reference proteome</keyword>
<accession>Q895J8</accession>
<comment type="function">
    <text evidence="2">One of the essential components for the initiation of protein synthesis. Protects formylmethionyl-tRNA from spontaneous hydrolysis and promotes its binding to the 30S ribosomal subunits. Also involved in the hydrolysis of GTP during the formation of the 70S ribosomal complex.</text>
</comment>
<comment type="subcellular location">
    <subcellularLocation>
        <location evidence="2">Cytoplasm</location>
    </subcellularLocation>
</comment>
<comment type="similarity">
    <text evidence="2">Belongs to the TRAFAC class translation factor GTPase superfamily. Classic translation factor GTPase family. IF-2 subfamily.</text>
</comment>
<name>IF2_CLOTE</name>
<gene>
    <name evidence="2" type="primary">infB</name>
    <name type="ordered locus">CTC_01275</name>
</gene>
<protein>
    <recommendedName>
        <fullName evidence="2">Translation initiation factor IF-2</fullName>
    </recommendedName>
</protein>
<organism>
    <name type="scientific">Clostridium tetani (strain Massachusetts / E88)</name>
    <dbReference type="NCBI Taxonomy" id="212717"/>
    <lineage>
        <taxon>Bacteria</taxon>
        <taxon>Bacillati</taxon>
        <taxon>Bacillota</taxon>
        <taxon>Clostridia</taxon>
        <taxon>Eubacteriales</taxon>
        <taxon>Clostridiaceae</taxon>
        <taxon>Clostridium</taxon>
    </lineage>
</organism>
<dbReference type="EMBL" id="AE015927">
    <property type="protein sequence ID" value="AAO35842.1"/>
    <property type="molecule type" value="Genomic_DNA"/>
</dbReference>
<dbReference type="SMR" id="Q895J8"/>
<dbReference type="STRING" id="212717.CTC_01275"/>
<dbReference type="KEGG" id="ctc:CTC_01275"/>
<dbReference type="HOGENOM" id="CLU_006301_5_1_9"/>
<dbReference type="Proteomes" id="UP000001412">
    <property type="component" value="Chromosome"/>
</dbReference>
<dbReference type="GO" id="GO:0005829">
    <property type="term" value="C:cytosol"/>
    <property type="evidence" value="ECO:0007669"/>
    <property type="project" value="TreeGrafter"/>
</dbReference>
<dbReference type="GO" id="GO:0005525">
    <property type="term" value="F:GTP binding"/>
    <property type="evidence" value="ECO:0007669"/>
    <property type="project" value="UniProtKB-KW"/>
</dbReference>
<dbReference type="GO" id="GO:0003924">
    <property type="term" value="F:GTPase activity"/>
    <property type="evidence" value="ECO:0007669"/>
    <property type="project" value="UniProtKB-UniRule"/>
</dbReference>
<dbReference type="GO" id="GO:0003743">
    <property type="term" value="F:translation initiation factor activity"/>
    <property type="evidence" value="ECO:0007669"/>
    <property type="project" value="UniProtKB-UniRule"/>
</dbReference>
<dbReference type="CDD" id="cd01887">
    <property type="entry name" value="IF2_eIF5B"/>
    <property type="match status" value="1"/>
</dbReference>
<dbReference type="CDD" id="cd03702">
    <property type="entry name" value="IF2_mtIF2_II"/>
    <property type="match status" value="1"/>
</dbReference>
<dbReference type="CDD" id="cd03692">
    <property type="entry name" value="mtIF2_IVc"/>
    <property type="match status" value="1"/>
</dbReference>
<dbReference type="FunFam" id="2.40.30.10:FF:000007">
    <property type="entry name" value="Translation initiation factor IF-2"/>
    <property type="match status" value="1"/>
</dbReference>
<dbReference type="FunFam" id="2.40.30.10:FF:000008">
    <property type="entry name" value="Translation initiation factor IF-2"/>
    <property type="match status" value="1"/>
</dbReference>
<dbReference type="FunFam" id="3.40.50.10050:FF:000001">
    <property type="entry name" value="Translation initiation factor IF-2"/>
    <property type="match status" value="1"/>
</dbReference>
<dbReference type="FunFam" id="3.40.50.300:FF:000019">
    <property type="entry name" value="Translation initiation factor IF-2"/>
    <property type="match status" value="1"/>
</dbReference>
<dbReference type="Gene3D" id="1.10.10.2480">
    <property type="match status" value="1"/>
</dbReference>
<dbReference type="Gene3D" id="3.40.50.300">
    <property type="entry name" value="P-loop containing nucleotide triphosphate hydrolases"/>
    <property type="match status" value="1"/>
</dbReference>
<dbReference type="Gene3D" id="2.40.30.10">
    <property type="entry name" value="Translation factors"/>
    <property type="match status" value="2"/>
</dbReference>
<dbReference type="Gene3D" id="3.40.50.10050">
    <property type="entry name" value="Translation initiation factor IF- 2, domain 3"/>
    <property type="match status" value="1"/>
</dbReference>
<dbReference type="HAMAP" id="MF_00100_B">
    <property type="entry name" value="IF_2_B"/>
    <property type="match status" value="1"/>
</dbReference>
<dbReference type="InterPro" id="IPR053905">
    <property type="entry name" value="EF-G-like_DII"/>
</dbReference>
<dbReference type="InterPro" id="IPR004161">
    <property type="entry name" value="EFTu-like_2"/>
</dbReference>
<dbReference type="InterPro" id="IPR044145">
    <property type="entry name" value="IF2_II"/>
</dbReference>
<dbReference type="InterPro" id="IPR006847">
    <property type="entry name" value="IF2_N"/>
</dbReference>
<dbReference type="InterPro" id="IPR027417">
    <property type="entry name" value="P-loop_NTPase"/>
</dbReference>
<dbReference type="InterPro" id="IPR005225">
    <property type="entry name" value="Small_GTP-bd"/>
</dbReference>
<dbReference type="InterPro" id="IPR000795">
    <property type="entry name" value="T_Tr_GTP-bd_dom"/>
</dbReference>
<dbReference type="InterPro" id="IPR000178">
    <property type="entry name" value="TF_IF2_bacterial-like"/>
</dbReference>
<dbReference type="InterPro" id="IPR015760">
    <property type="entry name" value="TIF_IF2"/>
</dbReference>
<dbReference type="InterPro" id="IPR023115">
    <property type="entry name" value="TIF_IF2_dom3"/>
</dbReference>
<dbReference type="InterPro" id="IPR036925">
    <property type="entry name" value="TIF_IF2_dom3_sf"/>
</dbReference>
<dbReference type="InterPro" id="IPR009000">
    <property type="entry name" value="Transl_B-barrel_sf"/>
</dbReference>
<dbReference type="NCBIfam" id="TIGR00487">
    <property type="entry name" value="IF-2"/>
    <property type="match status" value="1"/>
</dbReference>
<dbReference type="NCBIfam" id="TIGR00231">
    <property type="entry name" value="small_GTP"/>
    <property type="match status" value="1"/>
</dbReference>
<dbReference type="PANTHER" id="PTHR43381:SF5">
    <property type="entry name" value="TR-TYPE G DOMAIN-CONTAINING PROTEIN"/>
    <property type="match status" value="1"/>
</dbReference>
<dbReference type="PANTHER" id="PTHR43381">
    <property type="entry name" value="TRANSLATION INITIATION FACTOR IF-2-RELATED"/>
    <property type="match status" value="1"/>
</dbReference>
<dbReference type="Pfam" id="PF22042">
    <property type="entry name" value="EF-G_D2"/>
    <property type="match status" value="1"/>
</dbReference>
<dbReference type="Pfam" id="PF00009">
    <property type="entry name" value="GTP_EFTU"/>
    <property type="match status" value="1"/>
</dbReference>
<dbReference type="Pfam" id="PF03144">
    <property type="entry name" value="GTP_EFTU_D2"/>
    <property type="match status" value="1"/>
</dbReference>
<dbReference type="Pfam" id="PF11987">
    <property type="entry name" value="IF-2"/>
    <property type="match status" value="1"/>
</dbReference>
<dbReference type="Pfam" id="PF04760">
    <property type="entry name" value="IF2_N"/>
    <property type="match status" value="2"/>
</dbReference>
<dbReference type="SUPFAM" id="SSF52156">
    <property type="entry name" value="Initiation factor IF2/eIF5b, domain 3"/>
    <property type="match status" value="1"/>
</dbReference>
<dbReference type="SUPFAM" id="SSF52540">
    <property type="entry name" value="P-loop containing nucleoside triphosphate hydrolases"/>
    <property type="match status" value="1"/>
</dbReference>
<dbReference type="SUPFAM" id="SSF50447">
    <property type="entry name" value="Translation proteins"/>
    <property type="match status" value="2"/>
</dbReference>
<dbReference type="PROSITE" id="PS51722">
    <property type="entry name" value="G_TR_2"/>
    <property type="match status" value="1"/>
</dbReference>
<dbReference type="PROSITE" id="PS01176">
    <property type="entry name" value="IF2"/>
    <property type="match status" value="1"/>
</dbReference>
<evidence type="ECO:0000250" key="1"/>
<evidence type="ECO:0000255" key="2">
    <source>
        <dbReference type="HAMAP-Rule" id="MF_00100"/>
    </source>
</evidence>
<proteinExistence type="inferred from homology"/>